<evidence type="ECO:0000255" key="1">
    <source>
        <dbReference type="PROSITE-ProRule" id="PRU00227"/>
    </source>
</evidence>
<evidence type="ECO:0000256" key="2">
    <source>
        <dbReference type="SAM" id="MobiDB-lite"/>
    </source>
</evidence>
<evidence type="ECO:0000269" key="3">
    <source>
    </source>
</evidence>
<evidence type="ECO:0000269" key="4">
    <source>
    </source>
</evidence>
<evidence type="ECO:0000269" key="5">
    <source>
    </source>
</evidence>
<evidence type="ECO:0000303" key="6">
    <source>
    </source>
</evidence>
<proteinExistence type="evidence at protein level"/>
<organism>
    <name type="scientific">Fusarium proliferatum (strain ET1)</name>
    <name type="common">Orchid endophyte fungus</name>
    <dbReference type="NCBI Taxonomy" id="1227346"/>
    <lineage>
        <taxon>Eukaryota</taxon>
        <taxon>Fungi</taxon>
        <taxon>Dikarya</taxon>
        <taxon>Ascomycota</taxon>
        <taxon>Pezizomycotina</taxon>
        <taxon>Sordariomycetes</taxon>
        <taxon>Hypocreomycetidae</taxon>
        <taxon>Hypocreales</taxon>
        <taxon>Nectriaceae</taxon>
        <taxon>Fusarium</taxon>
        <taxon>Fusarium fujikuroi species complex</taxon>
    </lineage>
</organism>
<accession>A0A1L7VEP9</accession>
<protein>
    <recommendedName>
        <fullName evidence="6">Transcription factor FUP7</fullName>
    </recommendedName>
    <alternativeName>
        <fullName evidence="6">Fusaproliferin biosynthesis cluster protein 7</fullName>
    </alternativeName>
    <alternativeName>
        <fullName evidence="6">Zn(2)-C6 fungal-type domain-containing protein FUP7</fullName>
    </alternativeName>
</protein>
<feature type="chain" id="PRO_0000460566" description="Transcription factor FUP7">
    <location>
        <begin position="1"/>
        <end position="245"/>
    </location>
</feature>
<feature type="DNA-binding region" description="Zn(2)-C6 fungal-type" evidence="1">
    <location>
        <begin position="10"/>
        <end position="37"/>
    </location>
</feature>
<feature type="region of interest" description="Disordered" evidence="2">
    <location>
        <begin position="162"/>
        <end position="216"/>
    </location>
</feature>
<feature type="compositionally biased region" description="Polar residues" evidence="2">
    <location>
        <begin position="199"/>
        <end position="214"/>
    </location>
</feature>
<keyword id="KW-0238">DNA-binding</keyword>
<keyword id="KW-0479">Metal-binding</keyword>
<keyword id="KW-0539">Nucleus</keyword>
<keyword id="KW-0804">Transcription</keyword>
<keyword id="KW-0805">Transcription regulation</keyword>
<keyword id="KW-0862">Zinc</keyword>
<reference key="1">
    <citation type="journal article" date="2016" name="Genome Biol. Evol.">
        <title>Comparative 'omics' of the Fusarium fujikuroi species complex highlights differences in genetic potential and metabolite synthesis.</title>
        <authorList>
            <person name="Niehaus E.-M."/>
            <person name="Muensterkoetter M."/>
            <person name="Proctor R.H."/>
            <person name="Brown D.W."/>
            <person name="Sharon A."/>
            <person name="Idan Y."/>
            <person name="Oren-Young L."/>
            <person name="Sieber C.M."/>
            <person name="Novak O."/>
            <person name="Pencik A."/>
            <person name="Tarkowska D."/>
            <person name="Hromadova K."/>
            <person name="Freeman S."/>
            <person name="Maymon M."/>
            <person name="Elazar M."/>
            <person name="Youssef S.A."/>
            <person name="El-Shabrawy E.S.M."/>
            <person name="Shalaby A.B.A."/>
            <person name="Houterman P."/>
            <person name="Brock N.L."/>
            <person name="Burkhardt I."/>
            <person name="Tsavkelova E.A."/>
            <person name="Dickschat J.S."/>
            <person name="Galuszka P."/>
            <person name="Gueldener U."/>
            <person name="Tudzynski B."/>
        </authorList>
    </citation>
    <scope>NUCLEOTIDE SEQUENCE [LARGE SCALE GENOMIC DNA]</scope>
    <source>
        <strain>ET1</strain>
    </source>
</reference>
<reference key="2">
    <citation type="journal article" date="2018" name="Molecules">
        <title>Fusaproliferin, a fungal mycotoxin, shows cytotoxicity against pancreatic cancer cell lines.</title>
        <authorList>
            <person name="Hoque N."/>
            <person name="Hasan C.M."/>
            <person name="Rana M.S."/>
            <person name="Varsha A."/>
            <person name="Sohrab M.H."/>
            <person name="Rahman K.M."/>
        </authorList>
    </citation>
    <scope>BIOTECHNOLOGY</scope>
</reference>
<reference key="3">
    <citation type="journal article" date="2021" name="Toxins">
        <title>Identification and functional characterization of the gene cluster responsible for fusaproliferin biosynthesis in Fusarium proliferatum.</title>
        <authorList>
            <person name="Ceranic A."/>
            <person name="Svoboda T."/>
            <person name="Berthiller F."/>
            <person name="Sulyok M."/>
            <person name="Samson J.M."/>
            <person name="Gueldener U."/>
            <person name="Schuhmacher R."/>
            <person name="Adam G."/>
        </authorList>
    </citation>
    <scope>FUNCTION</scope>
</reference>
<reference key="4">
    <citation type="journal article" date="2022" name="Front. Pharmacol.">
        <title>Investigation of the anti-inflammatory activity of fusaproliferin analogues guided by transcriptome analysis.</title>
        <authorList>
            <person name="Kuang Q.X."/>
            <person name="Lei L.R."/>
            <person name="Li Q.Z."/>
            <person name="Peng W."/>
            <person name="Wang Y.M."/>
            <person name="Dai Y.F."/>
            <person name="Wang D."/>
            <person name="Gu Y.C."/>
            <person name="Deng Y."/>
            <person name="Guo D.L."/>
        </authorList>
    </citation>
    <scope>BIOTECHNOLOGY</scope>
</reference>
<gene>
    <name evidence="6" type="primary">FUP7</name>
    <name type="ORF">FPRO_05651</name>
</gene>
<dbReference type="EMBL" id="FJOF01000003">
    <property type="protein sequence ID" value="CZR39157.1"/>
    <property type="molecule type" value="Genomic_DNA"/>
</dbReference>
<dbReference type="VEuPathDB" id="FungiDB:FPRO_05651"/>
<dbReference type="Proteomes" id="UP000183971">
    <property type="component" value="Unassembled WGS sequence"/>
</dbReference>
<dbReference type="GO" id="GO:0005634">
    <property type="term" value="C:nucleus"/>
    <property type="evidence" value="ECO:0007669"/>
    <property type="project" value="UniProtKB-SubCell"/>
</dbReference>
<dbReference type="GO" id="GO:0003677">
    <property type="term" value="F:DNA binding"/>
    <property type="evidence" value="ECO:0007669"/>
    <property type="project" value="UniProtKB-KW"/>
</dbReference>
<dbReference type="GO" id="GO:0000981">
    <property type="term" value="F:DNA-binding transcription factor activity, RNA polymerase II-specific"/>
    <property type="evidence" value="ECO:0007669"/>
    <property type="project" value="InterPro"/>
</dbReference>
<dbReference type="GO" id="GO:0008270">
    <property type="term" value="F:zinc ion binding"/>
    <property type="evidence" value="ECO:0007669"/>
    <property type="project" value="InterPro"/>
</dbReference>
<dbReference type="CDD" id="cd00067">
    <property type="entry name" value="GAL4"/>
    <property type="match status" value="1"/>
</dbReference>
<dbReference type="Gene3D" id="4.10.240.10">
    <property type="entry name" value="Zn(2)-C6 fungal-type DNA-binding domain"/>
    <property type="match status" value="1"/>
</dbReference>
<dbReference type="InterPro" id="IPR050987">
    <property type="entry name" value="AtrR-like"/>
</dbReference>
<dbReference type="InterPro" id="IPR036864">
    <property type="entry name" value="Zn2-C6_fun-type_DNA-bd_sf"/>
</dbReference>
<dbReference type="InterPro" id="IPR001138">
    <property type="entry name" value="Zn2Cys6_DnaBD"/>
</dbReference>
<dbReference type="PANTHER" id="PTHR46910:SF3">
    <property type="entry name" value="HALOTOLERANCE PROTEIN 9-RELATED"/>
    <property type="match status" value="1"/>
</dbReference>
<dbReference type="PANTHER" id="PTHR46910">
    <property type="entry name" value="TRANSCRIPTION FACTOR PDR1"/>
    <property type="match status" value="1"/>
</dbReference>
<dbReference type="Pfam" id="PF00172">
    <property type="entry name" value="Zn_clus"/>
    <property type="match status" value="1"/>
</dbReference>
<dbReference type="SMART" id="SM00066">
    <property type="entry name" value="GAL4"/>
    <property type="match status" value="1"/>
</dbReference>
<dbReference type="SUPFAM" id="SSF57701">
    <property type="entry name" value="Zn2/Cys6 DNA-binding domain"/>
    <property type="match status" value="1"/>
</dbReference>
<dbReference type="PROSITE" id="PS00463">
    <property type="entry name" value="ZN2_CY6_FUNGAL_1"/>
    <property type="match status" value="1"/>
</dbReference>
<dbReference type="PROSITE" id="PS50048">
    <property type="entry name" value="ZN2_CY6_FUNGAL_2"/>
    <property type="match status" value="1"/>
</dbReference>
<comment type="function">
    <text evidence="4">Transcription factor; part of the gene cluster that mediates the biosynthesis of the mycotoxin fusaproliferin (FUP) that belongs to the class of bicyclic sesterterpenoids.</text>
</comment>
<comment type="subcellular location">
    <subcellularLocation>
        <location evidence="1">Nucleus</location>
    </subcellularLocation>
</comment>
<comment type="biotechnology">
    <text evidence="3 5">Fusaproliferin shows cytotoxicity against pancreatic cancer cell lines and provides a new chemical scaffold that can be further developed to obtain more potent synthetic agents against pancreatic cancer (PubMed:30545017). Fusaproliferin and its analogs show also anti-inflammatory activity and can be hit compounds for the treatment of inflammation-associated diseases (PubMed:37124719).</text>
</comment>
<sequence length="245" mass="27303">MSPARGRAACKTCRSRKQKCDGIRPACSRCRSLGLQCTWPTVLKRGPPKGYTKALEARLAETELVLIRLLHATNDEGLLARAFDGDTQKRAHKRFGERNTELKSSVIGEHKMLALMDHWERFPLRTADDVRQWIGEVSKTSMMQGEGTNQSNEKTRGLLRVESSSGNADYQHEDEVQSPAGAGDDMAVGDPYRDDSVDQDSIGQPPQRTESVGNMQPACETHAVQDITTSSRIELPADFKDQFLW</sequence>
<name>FUP7_FUSPR</name>